<proteinExistence type="inferred from homology"/>
<sequence>MQDTAKYLVHADITADGVVERSDVVGAVFGQTEGLLGDELDLRELQDASKVGRIDVEIDSENGQSFGRITIATSLDRVETAILGGALETIDRVGPCRSAIEVRKIEDVRSAKRREVVERAKSLLDGAFDESMRSSRDLVEEVRESVRVEDITDYEGLPAGPAVADSDAIVVVEGRADVLTLLQYGIKNAVAVEGTNVPEAVASLTETRTVTAFLDNDRGGELIRKELGQVGDIDYVATPPDGKCVEDLARHEVMSALREKVPYGRFKQAASDDADPEAAEQRTGEAAGATAADSEPAATDGIGGVTTDAEGKPVSSPESPAESPAADETAAVSAGTTPADAEEAAVDGATKTSTAGEEPNTPDDELTATSEAAEPGSAETKGESTAAEAPESSADGPAAAGASTDEQPKTLRGHVSDVIEAETGTFRLLDAEFAPLAAGDAGDVFEAVADAETVPAAVVVDGEASQRLLDIAAQRGIDHVVAASTGEFVKRPTSVRVRTATQLLNPEKA</sequence>
<dbReference type="EC" id="2.7.7.101" evidence="1"/>
<dbReference type="EMBL" id="CR936257">
    <property type="protein sequence ID" value="CAI50360.1"/>
    <property type="molecule type" value="Genomic_DNA"/>
</dbReference>
<dbReference type="RefSeq" id="WP_011323975.1">
    <property type="nucleotide sequence ID" value="NC_007426.1"/>
</dbReference>
<dbReference type="SMR" id="Q3INE3"/>
<dbReference type="STRING" id="348780.NP_4538A"/>
<dbReference type="EnsemblBacteria" id="CAI50360">
    <property type="protein sequence ID" value="CAI50360"/>
    <property type="gene ID" value="NP_4538A"/>
</dbReference>
<dbReference type="GeneID" id="3702092"/>
<dbReference type="KEGG" id="nph:NP_4538A"/>
<dbReference type="eggNOG" id="arCOG04281">
    <property type="taxonomic scope" value="Archaea"/>
</dbReference>
<dbReference type="HOGENOM" id="CLU_034626_0_0_2"/>
<dbReference type="OrthoDB" id="8643at2157"/>
<dbReference type="Proteomes" id="UP000002698">
    <property type="component" value="Chromosome"/>
</dbReference>
<dbReference type="GO" id="GO:0005737">
    <property type="term" value="C:cytoplasm"/>
    <property type="evidence" value="ECO:0007669"/>
    <property type="project" value="TreeGrafter"/>
</dbReference>
<dbReference type="GO" id="GO:0000428">
    <property type="term" value="C:DNA-directed RNA polymerase complex"/>
    <property type="evidence" value="ECO:0007669"/>
    <property type="project" value="UniProtKB-KW"/>
</dbReference>
<dbReference type="GO" id="GO:0000178">
    <property type="term" value="C:exosome (RNase complex)"/>
    <property type="evidence" value="ECO:0007669"/>
    <property type="project" value="InterPro"/>
</dbReference>
<dbReference type="GO" id="GO:1990077">
    <property type="term" value="C:primosome complex"/>
    <property type="evidence" value="ECO:0007669"/>
    <property type="project" value="UniProtKB-KW"/>
</dbReference>
<dbReference type="GO" id="GO:0003899">
    <property type="term" value="F:DNA-directed RNA polymerase activity"/>
    <property type="evidence" value="ECO:0007669"/>
    <property type="project" value="InterPro"/>
</dbReference>
<dbReference type="GO" id="GO:0046872">
    <property type="term" value="F:metal ion binding"/>
    <property type="evidence" value="ECO:0007669"/>
    <property type="project" value="UniProtKB-KW"/>
</dbReference>
<dbReference type="GO" id="GO:0008143">
    <property type="term" value="F:poly(A) binding"/>
    <property type="evidence" value="ECO:0007669"/>
    <property type="project" value="InterPro"/>
</dbReference>
<dbReference type="GO" id="GO:0006269">
    <property type="term" value="P:DNA replication, synthesis of primer"/>
    <property type="evidence" value="ECO:0007669"/>
    <property type="project" value="UniProtKB-UniRule"/>
</dbReference>
<dbReference type="CDD" id="cd01029">
    <property type="entry name" value="TOPRIM_primases"/>
    <property type="match status" value="1"/>
</dbReference>
<dbReference type="Gene3D" id="3.40.1360.10">
    <property type="match status" value="1"/>
</dbReference>
<dbReference type="HAMAP" id="MF_00007">
    <property type="entry name" value="DNA_primase_DnaG_arc"/>
    <property type="match status" value="1"/>
</dbReference>
<dbReference type="InterPro" id="IPR050219">
    <property type="entry name" value="DnaG_primase"/>
</dbReference>
<dbReference type="InterPro" id="IPR020607">
    <property type="entry name" value="Primase_DnaG_arc"/>
</dbReference>
<dbReference type="InterPro" id="IPR034154">
    <property type="entry name" value="TOPRIM_DnaG/twinkle"/>
</dbReference>
<dbReference type="InterPro" id="IPR006171">
    <property type="entry name" value="TOPRIM_dom"/>
</dbReference>
<dbReference type="NCBIfam" id="NF003108">
    <property type="entry name" value="PRK04031.1-1"/>
    <property type="match status" value="1"/>
</dbReference>
<dbReference type="PANTHER" id="PTHR30313">
    <property type="entry name" value="DNA PRIMASE"/>
    <property type="match status" value="1"/>
</dbReference>
<dbReference type="PANTHER" id="PTHR30313:SF2">
    <property type="entry name" value="DNA PRIMASE"/>
    <property type="match status" value="1"/>
</dbReference>
<dbReference type="Pfam" id="PF13662">
    <property type="entry name" value="Toprim_4"/>
    <property type="match status" value="1"/>
</dbReference>
<dbReference type="SMART" id="SM00493">
    <property type="entry name" value="TOPRIM"/>
    <property type="match status" value="1"/>
</dbReference>
<dbReference type="SUPFAM" id="SSF56731">
    <property type="entry name" value="DNA primase core"/>
    <property type="match status" value="1"/>
</dbReference>
<dbReference type="PROSITE" id="PS50880">
    <property type="entry name" value="TOPRIM"/>
    <property type="match status" value="1"/>
</dbReference>
<comment type="function">
    <text evidence="1">RNA polymerase that catalyzes the synthesis of short RNA molecules used as primers for DNA polymerase during DNA replication.</text>
</comment>
<comment type="catalytic activity">
    <reaction evidence="1">
        <text>ssDNA + n NTP = ssDNA/pppN(pN)n-1 hybrid + (n-1) diphosphate.</text>
        <dbReference type="EC" id="2.7.7.101"/>
    </reaction>
</comment>
<comment type="cofactor">
    <cofactor evidence="1">
        <name>Mg(2+)</name>
        <dbReference type="ChEBI" id="CHEBI:18420"/>
    </cofactor>
    <text evidence="1">Binds two Mg(2+) per subunit.</text>
</comment>
<comment type="subunit">
    <text evidence="1">Forms a ternary complex with MCM helicase and DNA.</text>
</comment>
<comment type="similarity">
    <text evidence="1">Belongs to the archaeal DnaG primase family.</text>
</comment>
<evidence type="ECO:0000255" key="1">
    <source>
        <dbReference type="HAMAP-Rule" id="MF_00007"/>
    </source>
</evidence>
<evidence type="ECO:0000256" key="2">
    <source>
        <dbReference type="SAM" id="MobiDB-lite"/>
    </source>
</evidence>
<gene>
    <name evidence="1" type="primary">dnaG</name>
    <name type="ordered locus">NP_4538A</name>
</gene>
<feature type="chain" id="PRO_0000240464" description="DNA primase DnaG">
    <location>
        <begin position="1"/>
        <end position="509"/>
    </location>
</feature>
<feature type="domain" description="Toprim" evidence="1">
    <location>
        <begin position="167"/>
        <end position="253"/>
    </location>
</feature>
<feature type="region of interest" description="Disordered" evidence="2">
    <location>
        <begin position="267"/>
        <end position="411"/>
    </location>
</feature>
<feature type="compositionally biased region" description="Low complexity" evidence="2">
    <location>
        <begin position="313"/>
        <end position="331"/>
    </location>
</feature>
<feature type="compositionally biased region" description="Low complexity" evidence="2">
    <location>
        <begin position="383"/>
        <end position="402"/>
    </location>
</feature>
<feature type="binding site" evidence="1">
    <location>
        <position position="173"/>
    </location>
    <ligand>
        <name>Mg(2+)</name>
        <dbReference type="ChEBI" id="CHEBI:18420"/>
        <label>1</label>
        <note>catalytic</note>
    </ligand>
</feature>
<feature type="binding site" evidence="1">
    <location>
        <position position="215"/>
    </location>
    <ligand>
        <name>Mg(2+)</name>
        <dbReference type="ChEBI" id="CHEBI:18420"/>
        <label>1</label>
        <note>catalytic</note>
    </ligand>
</feature>
<feature type="binding site" evidence="1">
    <location>
        <position position="215"/>
    </location>
    <ligand>
        <name>Mg(2+)</name>
        <dbReference type="ChEBI" id="CHEBI:18420"/>
        <label>2</label>
    </ligand>
</feature>
<feature type="binding site" evidence="1">
    <location>
        <position position="217"/>
    </location>
    <ligand>
        <name>Mg(2+)</name>
        <dbReference type="ChEBI" id="CHEBI:18420"/>
        <label>2</label>
    </ligand>
</feature>
<protein>
    <recommendedName>
        <fullName evidence="1">DNA primase DnaG</fullName>
        <ecNumber evidence="1">2.7.7.101</ecNumber>
    </recommendedName>
</protein>
<reference key="1">
    <citation type="journal article" date="2005" name="Genome Res.">
        <title>Living with two extremes: conclusions from the genome sequence of Natronomonas pharaonis.</title>
        <authorList>
            <person name="Falb M."/>
            <person name="Pfeiffer F."/>
            <person name="Palm P."/>
            <person name="Rodewald K."/>
            <person name="Hickmann V."/>
            <person name="Tittor J."/>
            <person name="Oesterhelt D."/>
        </authorList>
    </citation>
    <scope>NUCLEOTIDE SEQUENCE [LARGE SCALE GENOMIC DNA]</scope>
    <source>
        <strain>ATCC 35678 / DSM 2160 / CIP 103997 / JCM 8858 / NBRC 14720 / NCIMB 2260 / Gabara</strain>
    </source>
</reference>
<name>DNAG_NATPD</name>
<organism>
    <name type="scientific">Natronomonas pharaonis (strain ATCC 35678 / DSM 2160 / CIP 103997 / JCM 8858 / NBRC 14720 / NCIMB 2260 / Gabara)</name>
    <name type="common">Halobacterium pharaonis</name>
    <dbReference type="NCBI Taxonomy" id="348780"/>
    <lineage>
        <taxon>Archaea</taxon>
        <taxon>Methanobacteriati</taxon>
        <taxon>Methanobacteriota</taxon>
        <taxon>Stenosarchaea group</taxon>
        <taxon>Halobacteria</taxon>
        <taxon>Halobacteriales</taxon>
        <taxon>Haloarculaceae</taxon>
        <taxon>Natronomonas</taxon>
    </lineage>
</organism>
<accession>Q3INE3</accession>
<keyword id="KW-0235">DNA replication</keyword>
<keyword id="KW-0240">DNA-directed RNA polymerase</keyword>
<keyword id="KW-0460">Magnesium</keyword>
<keyword id="KW-0479">Metal-binding</keyword>
<keyword id="KW-0548">Nucleotidyltransferase</keyword>
<keyword id="KW-0639">Primosome</keyword>
<keyword id="KW-1185">Reference proteome</keyword>
<keyword id="KW-0804">Transcription</keyword>
<keyword id="KW-0808">Transferase</keyword>